<organism>
    <name type="scientific">Babesia bovis</name>
    <dbReference type="NCBI Taxonomy" id="5865"/>
    <lineage>
        <taxon>Eukaryota</taxon>
        <taxon>Sar</taxon>
        <taxon>Alveolata</taxon>
        <taxon>Apicomplexa</taxon>
        <taxon>Aconoidasida</taxon>
        <taxon>Piroplasmida</taxon>
        <taxon>Babesiidae</taxon>
        <taxon>Babesia</taxon>
    </lineage>
</organism>
<accession>P40632</accession>
<reference key="1">
    <citation type="journal article" date="1992" name="Biochem. Biophys. Res. Commun.">
        <title>Characterization of a cDNA clone from the haemoparasite Babesia bovis encoding a protein containing an 'HMG-Box'.</title>
        <authorList>
            <person name="Dalrymple B.P."/>
            <person name="Peters J.M."/>
        </authorList>
    </citation>
    <scope>NUCLEOTIDE SEQUENCE [MRNA]</scope>
</reference>
<reference key="2">
    <citation type="journal article" date="1992" name="Biochem. Biophys. Res. Commun.">
        <authorList>
            <person name="Dalrymple B.P."/>
            <person name="Peters J.M."/>
        </authorList>
    </citation>
    <scope>ERRATUM OF PUBMED:1567437</scope>
</reference>
<feature type="chain" id="PRO_0000048559" description="High mobility group protein homolog NHP1">
    <location>
        <begin position="1"/>
        <end position="97"/>
    </location>
</feature>
<feature type="DNA-binding region" description="HMG box" evidence="1">
    <location>
        <begin position="23"/>
        <end position="93"/>
    </location>
</feature>
<feature type="region of interest" description="Disordered" evidence="2">
    <location>
        <begin position="1"/>
        <end position="24"/>
    </location>
</feature>
<feature type="strand" evidence="3">
    <location>
        <begin position="5"/>
        <end position="9"/>
    </location>
</feature>
<feature type="helix" evidence="3">
    <location>
        <begin position="32"/>
        <end position="35"/>
    </location>
</feature>
<feature type="helix" evidence="3">
    <location>
        <begin position="36"/>
        <end position="40"/>
    </location>
</feature>
<feature type="helix" evidence="3">
    <location>
        <begin position="41"/>
        <end position="44"/>
    </location>
</feature>
<feature type="helix" evidence="3">
    <location>
        <begin position="54"/>
        <end position="61"/>
    </location>
</feature>
<feature type="strand" evidence="3">
    <location>
        <begin position="63"/>
        <end position="66"/>
    </location>
</feature>
<feature type="turn" evidence="3">
    <location>
        <begin position="69"/>
        <end position="71"/>
    </location>
</feature>
<feature type="strand" evidence="3">
    <location>
        <begin position="72"/>
        <end position="75"/>
    </location>
</feature>
<feature type="helix" evidence="3">
    <location>
        <begin position="76"/>
        <end position="96"/>
    </location>
</feature>
<comment type="subcellular location">
    <subcellularLocation>
        <location evidence="1">Nucleus</location>
    </subcellularLocation>
</comment>
<sequence>MAGASDRTGVRRPRKAKKDPNAPKRALSSYMFFAKEKRVEIIAENPEIAKDVAAIGKMIGAAWNALSDEEKKPYERMSDEDRVRYEREKAEYAQRKV</sequence>
<proteinExistence type="evidence at protein level"/>
<name>NHP1_BABBO</name>
<dbReference type="EMBL" id="M81360">
    <property type="protein sequence ID" value="AAA27799.1"/>
    <property type="molecule type" value="mRNA"/>
</dbReference>
<dbReference type="PIR" id="JQ1490">
    <property type="entry name" value="JQ1490"/>
</dbReference>
<dbReference type="PDB" id="2LHJ">
    <property type="method" value="NMR"/>
    <property type="chains" value="A=1-97"/>
</dbReference>
<dbReference type="PDBsum" id="2LHJ"/>
<dbReference type="BMRB" id="P40632"/>
<dbReference type="SMR" id="P40632"/>
<dbReference type="VEuPathDB" id="PiroplasmaDB:BBOV_IV001910"/>
<dbReference type="eggNOG" id="KOG0381">
    <property type="taxonomic scope" value="Eukaryota"/>
</dbReference>
<dbReference type="OMA" id="MKNMGGK"/>
<dbReference type="EvolutionaryTrace" id="P40632"/>
<dbReference type="GO" id="GO:0005634">
    <property type="term" value="C:nucleus"/>
    <property type="evidence" value="ECO:0007669"/>
    <property type="project" value="UniProtKB-SubCell"/>
</dbReference>
<dbReference type="GO" id="GO:0003677">
    <property type="term" value="F:DNA binding"/>
    <property type="evidence" value="ECO:0007669"/>
    <property type="project" value="UniProtKB-KW"/>
</dbReference>
<dbReference type="FunFam" id="1.10.30.10:FF:000037">
    <property type="entry name" value="High mobility group protein B2"/>
    <property type="match status" value="1"/>
</dbReference>
<dbReference type="Gene3D" id="1.10.30.10">
    <property type="entry name" value="High mobility group box domain"/>
    <property type="match status" value="1"/>
</dbReference>
<dbReference type="InterPro" id="IPR009071">
    <property type="entry name" value="HMG_box_dom"/>
</dbReference>
<dbReference type="InterPro" id="IPR036910">
    <property type="entry name" value="HMG_box_dom_sf"/>
</dbReference>
<dbReference type="InterPro" id="IPR050342">
    <property type="entry name" value="HMGB"/>
</dbReference>
<dbReference type="PANTHER" id="PTHR48112">
    <property type="entry name" value="HIGH MOBILITY GROUP PROTEIN DSP1"/>
    <property type="match status" value="1"/>
</dbReference>
<dbReference type="PANTHER" id="PTHR48112:SF22">
    <property type="entry name" value="MITOCHONDRIAL TRANSCRIPTION FACTOR A, ISOFORM B"/>
    <property type="match status" value="1"/>
</dbReference>
<dbReference type="Pfam" id="PF00505">
    <property type="entry name" value="HMG_box"/>
    <property type="match status" value="1"/>
</dbReference>
<dbReference type="SMART" id="SM00398">
    <property type="entry name" value="HMG"/>
    <property type="match status" value="1"/>
</dbReference>
<dbReference type="SUPFAM" id="SSF47095">
    <property type="entry name" value="HMG-box"/>
    <property type="match status" value="1"/>
</dbReference>
<dbReference type="PROSITE" id="PS50118">
    <property type="entry name" value="HMG_BOX_2"/>
    <property type="match status" value="1"/>
</dbReference>
<evidence type="ECO:0000255" key="1">
    <source>
        <dbReference type="PROSITE-ProRule" id="PRU00267"/>
    </source>
</evidence>
<evidence type="ECO:0000256" key="2">
    <source>
        <dbReference type="SAM" id="MobiDB-lite"/>
    </source>
</evidence>
<evidence type="ECO:0007829" key="3">
    <source>
        <dbReference type="PDB" id="2LHJ"/>
    </source>
</evidence>
<protein>
    <recommendedName>
        <fullName>High mobility group protein homolog NHP1</fullName>
    </recommendedName>
</protein>
<keyword id="KW-0002">3D-structure</keyword>
<keyword id="KW-0238">DNA-binding</keyword>
<keyword id="KW-0539">Nucleus</keyword>